<evidence type="ECO:0000255" key="1">
    <source>
        <dbReference type="HAMAP-Rule" id="MF_01588"/>
    </source>
</evidence>
<proteinExistence type="inferred from homology"/>
<dbReference type="EC" id="6.5.1.2" evidence="1"/>
<dbReference type="EMBL" id="CP000492">
    <property type="protein sequence ID" value="ABL64532.1"/>
    <property type="molecule type" value="Genomic_DNA"/>
</dbReference>
<dbReference type="RefSeq" id="WP_011744365.1">
    <property type="nucleotide sequence ID" value="NC_008639.1"/>
</dbReference>
<dbReference type="SMR" id="A1BDQ5"/>
<dbReference type="STRING" id="290317.Cpha266_0475"/>
<dbReference type="KEGG" id="cph:Cpha266_0475"/>
<dbReference type="eggNOG" id="COG0272">
    <property type="taxonomic scope" value="Bacteria"/>
</dbReference>
<dbReference type="HOGENOM" id="CLU_007764_2_1_10"/>
<dbReference type="OrthoDB" id="9759736at2"/>
<dbReference type="Proteomes" id="UP000008701">
    <property type="component" value="Chromosome"/>
</dbReference>
<dbReference type="GO" id="GO:0005829">
    <property type="term" value="C:cytosol"/>
    <property type="evidence" value="ECO:0007669"/>
    <property type="project" value="TreeGrafter"/>
</dbReference>
<dbReference type="GO" id="GO:0003677">
    <property type="term" value="F:DNA binding"/>
    <property type="evidence" value="ECO:0007669"/>
    <property type="project" value="InterPro"/>
</dbReference>
<dbReference type="GO" id="GO:0003911">
    <property type="term" value="F:DNA ligase (NAD+) activity"/>
    <property type="evidence" value="ECO:0007669"/>
    <property type="project" value="UniProtKB-UniRule"/>
</dbReference>
<dbReference type="GO" id="GO:0046872">
    <property type="term" value="F:metal ion binding"/>
    <property type="evidence" value="ECO:0007669"/>
    <property type="project" value="UniProtKB-KW"/>
</dbReference>
<dbReference type="GO" id="GO:0006281">
    <property type="term" value="P:DNA repair"/>
    <property type="evidence" value="ECO:0007669"/>
    <property type="project" value="UniProtKB-KW"/>
</dbReference>
<dbReference type="GO" id="GO:0006260">
    <property type="term" value="P:DNA replication"/>
    <property type="evidence" value="ECO:0007669"/>
    <property type="project" value="UniProtKB-KW"/>
</dbReference>
<dbReference type="CDD" id="cd17748">
    <property type="entry name" value="BRCT_DNA_ligase_like"/>
    <property type="match status" value="1"/>
</dbReference>
<dbReference type="CDD" id="cd00114">
    <property type="entry name" value="LIGANc"/>
    <property type="match status" value="1"/>
</dbReference>
<dbReference type="FunFam" id="1.10.150.20:FF:000006">
    <property type="entry name" value="DNA ligase"/>
    <property type="match status" value="1"/>
</dbReference>
<dbReference type="FunFam" id="1.10.150.20:FF:000007">
    <property type="entry name" value="DNA ligase"/>
    <property type="match status" value="1"/>
</dbReference>
<dbReference type="FunFam" id="1.10.287.610:FF:000002">
    <property type="entry name" value="DNA ligase"/>
    <property type="match status" value="1"/>
</dbReference>
<dbReference type="FunFam" id="2.40.50.140:FF:000012">
    <property type="entry name" value="DNA ligase"/>
    <property type="match status" value="1"/>
</dbReference>
<dbReference type="Gene3D" id="6.20.10.30">
    <property type="match status" value="1"/>
</dbReference>
<dbReference type="Gene3D" id="1.10.150.20">
    <property type="entry name" value="5' to 3' exonuclease, C-terminal subdomain"/>
    <property type="match status" value="2"/>
</dbReference>
<dbReference type="Gene3D" id="3.40.50.10190">
    <property type="entry name" value="BRCT domain"/>
    <property type="match status" value="1"/>
</dbReference>
<dbReference type="Gene3D" id="3.30.470.30">
    <property type="entry name" value="DNA ligase/mRNA capping enzyme"/>
    <property type="match status" value="1"/>
</dbReference>
<dbReference type="Gene3D" id="1.10.287.610">
    <property type="entry name" value="Helix hairpin bin"/>
    <property type="match status" value="1"/>
</dbReference>
<dbReference type="Gene3D" id="2.40.50.140">
    <property type="entry name" value="Nucleic acid-binding proteins"/>
    <property type="match status" value="1"/>
</dbReference>
<dbReference type="HAMAP" id="MF_01588">
    <property type="entry name" value="DNA_ligase_A"/>
    <property type="match status" value="1"/>
</dbReference>
<dbReference type="InterPro" id="IPR001357">
    <property type="entry name" value="BRCT_dom"/>
</dbReference>
<dbReference type="InterPro" id="IPR036420">
    <property type="entry name" value="BRCT_dom_sf"/>
</dbReference>
<dbReference type="InterPro" id="IPR041663">
    <property type="entry name" value="DisA/LigA_HHH"/>
</dbReference>
<dbReference type="InterPro" id="IPR001679">
    <property type="entry name" value="DNA_ligase"/>
</dbReference>
<dbReference type="InterPro" id="IPR018239">
    <property type="entry name" value="DNA_ligase_AS"/>
</dbReference>
<dbReference type="InterPro" id="IPR013839">
    <property type="entry name" value="DNAligase_adenylation"/>
</dbReference>
<dbReference type="InterPro" id="IPR013840">
    <property type="entry name" value="DNAligase_N"/>
</dbReference>
<dbReference type="InterPro" id="IPR003583">
    <property type="entry name" value="Hlx-hairpin-Hlx_DNA-bd_motif"/>
</dbReference>
<dbReference type="InterPro" id="IPR012340">
    <property type="entry name" value="NA-bd_OB-fold"/>
</dbReference>
<dbReference type="InterPro" id="IPR004150">
    <property type="entry name" value="NAD_DNA_ligase_OB"/>
</dbReference>
<dbReference type="InterPro" id="IPR010994">
    <property type="entry name" value="RuvA_2-like"/>
</dbReference>
<dbReference type="InterPro" id="IPR004149">
    <property type="entry name" value="Znf_DNAligase_C4"/>
</dbReference>
<dbReference type="NCBIfam" id="TIGR00575">
    <property type="entry name" value="dnlj"/>
    <property type="match status" value="1"/>
</dbReference>
<dbReference type="NCBIfam" id="NF005932">
    <property type="entry name" value="PRK07956.1"/>
    <property type="match status" value="1"/>
</dbReference>
<dbReference type="PANTHER" id="PTHR23389">
    <property type="entry name" value="CHROMOSOME TRANSMISSION FIDELITY FACTOR 18"/>
    <property type="match status" value="1"/>
</dbReference>
<dbReference type="PANTHER" id="PTHR23389:SF9">
    <property type="entry name" value="DNA LIGASE"/>
    <property type="match status" value="1"/>
</dbReference>
<dbReference type="Pfam" id="PF00533">
    <property type="entry name" value="BRCT"/>
    <property type="match status" value="1"/>
</dbReference>
<dbReference type="Pfam" id="PF01653">
    <property type="entry name" value="DNA_ligase_aden"/>
    <property type="match status" value="1"/>
</dbReference>
<dbReference type="Pfam" id="PF03120">
    <property type="entry name" value="DNA_ligase_OB"/>
    <property type="match status" value="1"/>
</dbReference>
<dbReference type="Pfam" id="PF03119">
    <property type="entry name" value="DNA_ligase_ZBD"/>
    <property type="match status" value="1"/>
</dbReference>
<dbReference type="Pfam" id="PF12826">
    <property type="entry name" value="HHH_2"/>
    <property type="match status" value="1"/>
</dbReference>
<dbReference type="Pfam" id="PF22745">
    <property type="entry name" value="Nlig-Ia"/>
    <property type="match status" value="1"/>
</dbReference>
<dbReference type="PIRSF" id="PIRSF001604">
    <property type="entry name" value="LigA"/>
    <property type="match status" value="1"/>
</dbReference>
<dbReference type="SMART" id="SM00292">
    <property type="entry name" value="BRCT"/>
    <property type="match status" value="1"/>
</dbReference>
<dbReference type="SMART" id="SM00278">
    <property type="entry name" value="HhH1"/>
    <property type="match status" value="3"/>
</dbReference>
<dbReference type="SMART" id="SM00532">
    <property type="entry name" value="LIGANc"/>
    <property type="match status" value="1"/>
</dbReference>
<dbReference type="SUPFAM" id="SSF52113">
    <property type="entry name" value="BRCT domain"/>
    <property type="match status" value="1"/>
</dbReference>
<dbReference type="SUPFAM" id="SSF56091">
    <property type="entry name" value="DNA ligase/mRNA capping enzyme, catalytic domain"/>
    <property type="match status" value="1"/>
</dbReference>
<dbReference type="SUPFAM" id="SSF50249">
    <property type="entry name" value="Nucleic acid-binding proteins"/>
    <property type="match status" value="1"/>
</dbReference>
<dbReference type="SUPFAM" id="SSF47781">
    <property type="entry name" value="RuvA domain 2-like"/>
    <property type="match status" value="1"/>
</dbReference>
<dbReference type="PROSITE" id="PS50172">
    <property type="entry name" value="BRCT"/>
    <property type="match status" value="1"/>
</dbReference>
<dbReference type="PROSITE" id="PS01055">
    <property type="entry name" value="DNA_LIGASE_N1"/>
    <property type="match status" value="1"/>
</dbReference>
<keyword id="KW-0227">DNA damage</keyword>
<keyword id="KW-0234">DNA repair</keyword>
<keyword id="KW-0235">DNA replication</keyword>
<keyword id="KW-0436">Ligase</keyword>
<keyword id="KW-0460">Magnesium</keyword>
<keyword id="KW-0464">Manganese</keyword>
<keyword id="KW-0479">Metal-binding</keyword>
<keyword id="KW-0520">NAD</keyword>
<keyword id="KW-1185">Reference proteome</keyword>
<keyword id="KW-0862">Zinc</keyword>
<protein>
    <recommendedName>
        <fullName evidence="1">DNA ligase</fullName>
        <ecNumber evidence="1">6.5.1.2</ecNumber>
    </recommendedName>
    <alternativeName>
        <fullName evidence="1">Polydeoxyribonucleotide synthase [NAD(+)]</fullName>
    </alternativeName>
</protein>
<gene>
    <name evidence="1" type="primary">ligA</name>
    <name type="ordered locus">Cpha266_0475</name>
</gene>
<comment type="function">
    <text evidence="1">DNA ligase that catalyzes the formation of phosphodiester linkages between 5'-phosphoryl and 3'-hydroxyl groups in double-stranded DNA using NAD as a coenzyme and as the energy source for the reaction. It is essential for DNA replication and repair of damaged DNA.</text>
</comment>
<comment type="catalytic activity">
    <reaction evidence="1">
        <text>NAD(+) + (deoxyribonucleotide)n-3'-hydroxyl + 5'-phospho-(deoxyribonucleotide)m = (deoxyribonucleotide)n+m + AMP + beta-nicotinamide D-nucleotide.</text>
        <dbReference type="EC" id="6.5.1.2"/>
    </reaction>
</comment>
<comment type="cofactor">
    <cofactor evidence="1">
        <name>Mg(2+)</name>
        <dbReference type="ChEBI" id="CHEBI:18420"/>
    </cofactor>
    <cofactor evidence="1">
        <name>Mn(2+)</name>
        <dbReference type="ChEBI" id="CHEBI:29035"/>
    </cofactor>
</comment>
<comment type="similarity">
    <text evidence="1">Belongs to the NAD-dependent DNA ligase family. LigA subfamily.</text>
</comment>
<name>DNLJ_CHLPD</name>
<organism>
    <name type="scientific">Chlorobium phaeobacteroides (strain DSM 266 / SMG 266 / 2430)</name>
    <dbReference type="NCBI Taxonomy" id="290317"/>
    <lineage>
        <taxon>Bacteria</taxon>
        <taxon>Pseudomonadati</taxon>
        <taxon>Chlorobiota</taxon>
        <taxon>Chlorobiia</taxon>
        <taxon>Chlorobiales</taxon>
        <taxon>Chlorobiaceae</taxon>
        <taxon>Chlorobium/Pelodictyon group</taxon>
        <taxon>Chlorobium</taxon>
    </lineage>
</organism>
<reference key="1">
    <citation type="submission" date="2006-12" db="EMBL/GenBank/DDBJ databases">
        <title>Complete sequence of Chlorobium phaeobacteroides DSM 266.</title>
        <authorList>
            <consortium name="US DOE Joint Genome Institute"/>
            <person name="Copeland A."/>
            <person name="Lucas S."/>
            <person name="Lapidus A."/>
            <person name="Barry K."/>
            <person name="Detter J.C."/>
            <person name="Glavina del Rio T."/>
            <person name="Hammon N."/>
            <person name="Israni S."/>
            <person name="Pitluck S."/>
            <person name="Goltsman E."/>
            <person name="Schmutz J."/>
            <person name="Larimer F."/>
            <person name="Land M."/>
            <person name="Hauser L."/>
            <person name="Mikhailova N."/>
            <person name="Li T."/>
            <person name="Overmann J."/>
            <person name="Bryant D.A."/>
            <person name="Richardson P."/>
        </authorList>
    </citation>
    <scope>NUCLEOTIDE SEQUENCE [LARGE SCALE GENOMIC DNA]</scope>
    <source>
        <strain>DSM 266 / SMG 266 / 2430</strain>
    </source>
</reference>
<feature type="chain" id="PRO_0000313186" description="DNA ligase">
    <location>
        <begin position="1"/>
        <end position="676"/>
    </location>
</feature>
<feature type="domain" description="BRCT" evidence="1">
    <location>
        <begin position="600"/>
        <end position="676"/>
    </location>
</feature>
<feature type="active site" description="N6-AMP-lysine intermediate" evidence="1">
    <location>
        <position position="120"/>
    </location>
</feature>
<feature type="binding site" evidence="1">
    <location>
        <begin position="35"/>
        <end position="39"/>
    </location>
    <ligand>
        <name>NAD(+)</name>
        <dbReference type="ChEBI" id="CHEBI:57540"/>
    </ligand>
</feature>
<feature type="binding site" evidence="1">
    <location>
        <begin position="84"/>
        <end position="85"/>
    </location>
    <ligand>
        <name>NAD(+)</name>
        <dbReference type="ChEBI" id="CHEBI:57540"/>
    </ligand>
</feature>
<feature type="binding site" evidence="1">
    <location>
        <position position="118"/>
    </location>
    <ligand>
        <name>NAD(+)</name>
        <dbReference type="ChEBI" id="CHEBI:57540"/>
    </ligand>
</feature>
<feature type="binding site" evidence="1">
    <location>
        <position position="141"/>
    </location>
    <ligand>
        <name>NAD(+)</name>
        <dbReference type="ChEBI" id="CHEBI:57540"/>
    </ligand>
</feature>
<feature type="binding site" evidence="1">
    <location>
        <position position="184"/>
    </location>
    <ligand>
        <name>NAD(+)</name>
        <dbReference type="ChEBI" id="CHEBI:57540"/>
    </ligand>
</feature>
<feature type="binding site" evidence="1">
    <location>
        <position position="299"/>
    </location>
    <ligand>
        <name>NAD(+)</name>
        <dbReference type="ChEBI" id="CHEBI:57540"/>
    </ligand>
</feature>
<feature type="binding site" evidence="1">
    <location>
        <position position="323"/>
    </location>
    <ligand>
        <name>NAD(+)</name>
        <dbReference type="ChEBI" id="CHEBI:57540"/>
    </ligand>
</feature>
<feature type="binding site" evidence="1">
    <location>
        <position position="417"/>
    </location>
    <ligand>
        <name>Zn(2+)</name>
        <dbReference type="ChEBI" id="CHEBI:29105"/>
    </ligand>
</feature>
<feature type="binding site" evidence="1">
    <location>
        <position position="420"/>
    </location>
    <ligand>
        <name>Zn(2+)</name>
        <dbReference type="ChEBI" id="CHEBI:29105"/>
    </ligand>
</feature>
<feature type="binding site" evidence="1">
    <location>
        <position position="435"/>
    </location>
    <ligand>
        <name>Zn(2+)</name>
        <dbReference type="ChEBI" id="CHEBI:29105"/>
    </ligand>
</feature>
<feature type="binding site" evidence="1">
    <location>
        <position position="441"/>
    </location>
    <ligand>
        <name>Zn(2+)</name>
        <dbReference type="ChEBI" id="CHEBI:29105"/>
    </ligand>
</feature>
<accession>A1BDQ5</accession>
<sequence>MSDAVNVRKAIEELRREINRHNTLYYVDARPEISDYEFDRLMERLIELEKAFPDFVTPDSPSHRVGGAITREFPSVRHREPMLSLSNTYSLAEVEDFYSRVKKLLLVEGVREQDMAAELKFDGVAISLLYRDGLLVQGATRGDGTEGDDITTNLKTLSSVPLRIPLTSLPVIEGIERDIEIRGEVFMQKDDFARLNEARPEEDRFANPRNATAGTLKLQDSGEVARRRLNFVAYYLRLSSQDSFLLTQYDRLELLGQLGFFTGKHYRLCRDMKEIGDFIGYWAVERWNLPYETDGVVLKLNDVALWPRIGATAKSPRWAIAYKYPAQQAKTVLQGVAFQVGRLGTVTPVAELEPVRLAGSTVSRSTLHNFDEIERLGLMLHDRVIIEKSGEVIPKVIRVVLDERPENAEPVGVPSVCPECGASLEKPENEVSYYCPDQDSCPAQIRGRLLHFASRNALDIQSLGESLVAQLVQKGLVRDAGDLYLLQQPQLEALERMGRKSAHNLLRALQESREKSYERLLYALGIRHVGQATARELARAYETVEALQNASEEELATVPDVGPVVAHSVKDYFSKSSTQMLLRKLRDAGFPLRFTGPQKLINRNFEGVNVLFTGALERYGRQQASELVQQRGGRVVGSVSRSTGVVVAGSEPGSKLDKARKLGVKVISEDEFNAML</sequence>